<accession>P15782</accession>
<dbReference type="PIR" id="S00363">
    <property type="entry name" value="LNPG1"/>
</dbReference>
<dbReference type="SMR" id="P15782"/>
<dbReference type="STRING" id="9823.ENSSSCP00000049863"/>
<dbReference type="PaxDb" id="9823-ENSSSCP00000008786"/>
<dbReference type="PeptideAtlas" id="P15782"/>
<dbReference type="eggNOG" id="KOG1340">
    <property type="taxonomic scope" value="Eukaryota"/>
</dbReference>
<dbReference type="InParanoid" id="P15782"/>
<dbReference type="Proteomes" id="UP000008227">
    <property type="component" value="Unplaced"/>
</dbReference>
<dbReference type="Proteomes" id="UP000314985">
    <property type="component" value="Unplaced"/>
</dbReference>
<dbReference type="Proteomes" id="UP000694570">
    <property type="component" value="Unplaced"/>
</dbReference>
<dbReference type="Proteomes" id="UP000694571">
    <property type="component" value="Unplaced"/>
</dbReference>
<dbReference type="Proteomes" id="UP000694720">
    <property type="component" value="Unplaced"/>
</dbReference>
<dbReference type="Proteomes" id="UP000694722">
    <property type="component" value="Unplaced"/>
</dbReference>
<dbReference type="Proteomes" id="UP000694723">
    <property type="component" value="Unplaced"/>
</dbReference>
<dbReference type="Proteomes" id="UP000694724">
    <property type="component" value="Unplaced"/>
</dbReference>
<dbReference type="Proteomes" id="UP000694725">
    <property type="component" value="Unplaced"/>
</dbReference>
<dbReference type="Proteomes" id="UP000694726">
    <property type="component" value="Unplaced"/>
</dbReference>
<dbReference type="Proteomes" id="UP000694727">
    <property type="component" value="Unplaced"/>
</dbReference>
<dbReference type="Proteomes" id="UP000694728">
    <property type="component" value="Unplaced"/>
</dbReference>
<dbReference type="GO" id="GO:0005576">
    <property type="term" value="C:extracellular region"/>
    <property type="evidence" value="ECO:0007669"/>
    <property type="project" value="UniProtKB-SubCell"/>
</dbReference>
<dbReference type="GO" id="GO:0007585">
    <property type="term" value="P:respiratory gaseous exchange by respiratory system"/>
    <property type="evidence" value="ECO:0007669"/>
    <property type="project" value="UniProtKB-KW"/>
</dbReference>
<dbReference type="Gene3D" id="1.10.225.10">
    <property type="entry name" value="Saposin-like"/>
    <property type="match status" value="1"/>
</dbReference>
<dbReference type="InterPro" id="IPR011001">
    <property type="entry name" value="Saposin-like"/>
</dbReference>
<dbReference type="InterPro" id="IPR008139">
    <property type="entry name" value="SaposinB_dom"/>
</dbReference>
<dbReference type="SMART" id="SM00741">
    <property type="entry name" value="SapB"/>
    <property type="match status" value="1"/>
</dbReference>
<dbReference type="SUPFAM" id="SSF47862">
    <property type="entry name" value="Saposin"/>
    <property type="match status" value="1"/>
</dbReference>
<dbReference type="PROSITE" id="PS50015">
    <property type="entry name" value="SAP_B"/>
    <property type="match status" value="1"/>
</dbReference>
<sequence>FPIPLPFCWLCRTLIKRIQAVVPKGVLLKAVAQVCHVVPLPVGGICQCLAERYIVICLNMLLDRTLPQLVCGLVLRCSS</sequence>
<organism>
    <name type="scientific">Sus scrofa</name>
    <name type="common">Pig</name>
    <dbReference type="NCBI Taxonomy" id="9823"/>
    <lineage>
        <taxon>Eukaryota</taxon>
        <taxon>Metazoa</taxon>
        <taxon>Chordata</taxon>
        <taxon>Craniata</taxon>
        <taxon>Vertebrata</taxon>
        <taxon>Euteleostomi</taxon>
        <taxon>Mammalia</taxon>
        <taxon>Eutheria</taxon>
        <taxon>Laurasiatheria</taxon>
        <taxon>Artiodactyla</taxon>
        <taxon>Suina</taxon>
        <taxon>Suidae</taxon>
        <taxon>Sus</taxon>
    </lineage>
</organism>
<feature type="chain" id="PRO_0000175241" description="Pulmonary surfactant-associated protein B">
    <location>
        <begin position="1"/>
        <end position="79"/>
    </location>
</feature>
<feature type="domain" description="Saposin B-type" evidence="1">
    <location>
        <begin position="4"/>
        <end position="79"/>
    </location>
</feature>
<feature type="disulfide bond" evidence="1 2">
    <location>
        <begin position="8"/>
        <end position="77"/>
    </location>
</feature>
<feature type="disulfide bond" evidence="1 2">
    <location>
        <begin position="11"/>
        <end position="71"/>
    </location>
</feature>
<feature type="disulfide bond" evidence="1 2">
    <location>
        <begin position="35"/>
        <end position="46"/>
    </location>
</feature>
<feature type="disulfide bond" description="Interchain" evidence="1 2">
    <location>
        <position position="48"/>
    </location>
</feature>
<feature type="sequence variant">
    <original>C</original>
    <variation>L</variation>
    <location>
        <position position="57"/>
    </location>
</feature>
<gene>
    <name type="primary">SFTPB</name>
    <name type="synonym">SFTP3</name>
</gene>
<comment type="function">
    <text>Pulmonary surfactant-associated proteins promote alveolar stability by lowering the surface tension at the air-liquid interface in the peripheral air spaces. SP-B increases the collapse pressure of palmitic acid to nearly 70 millinewtons per meter.</text>
</comment>
<comment type="subunit">
    <text evidence="2">Homodimer; disulfide-linked.</text>
</comment>
<comment type="subcellular location">
    <subcellularLocation>
        <location>Secreted</location>
        <location>Extracellular space</location>
        <location>Surface film</location>
    </subcellularLocation>
</comment>
<comment type="miscellaneous">
    <text>Pulmonary surfactant consists of 90% lipid and 10% protein. There are 4 surfactant-associated proteins: 2 collagenous, carbohydrate-binding glycoproteins (SP-A and SP-D) and 2 small hydrophobic proteins (SP-B and SP-C).</text>
</comment>
<keyword id="KW-0903">Direct protein sequencing</keyword>
<keyword id="KW-1015">Disulfide bond</keyword>
<keyword id="KW-0305">Gaseous exchange</keyword>
<keyword id="KW-1185">Reference proteome</keyword>
<keyword id="KW-0964">Secreted</keyword>
<keyword id="KW-0767">Surface film</keyword>
<proteinExistence type="evidence at protein level"/>
<name>PSPB_PIG</name>
<protein>
    <recommendedName>
        <fullName>Pulmonary surfactant-associated protein B</fullName>
        <shortName>SP-B</shortName>
    </recommendedName>
    <alternativeName>
        <fullName>8 kDa protein</fullName>
    </alternativeName>
    <alternativeName>
        <fullName>Pulmonary surfactant-associated proteolipid SPL(Phe)</fullName>
    </alternativeName>
</protein>
<reference key="1">
    <citation type="journal article" date="1988" name="Eur. J. Biochem.">
        <title>Low-molecular-mass surfactant protein type 1. The primary structure of a hydrophobic 8-kDa polypeptide with eight half-cystine residues.</title>
        <authorList>
            <person name="Curstedt T."/>
            <person name="Johansson J."/>
            <person name="Barros-Soederling J."/>
            <person name="Robertson B."/>
            <person name="Nilsson G."/>
            <person name="Westberg M."/>
            <person name="Joernvall H."/>
        </authorList>
    </citation>
    <scope>PROTEIN SEQUENCE</scope>
</reference>
<reference key="2">
    <citation type="journal article" date="1991" name="Biochemistry">
        <title>Surfactant protein B: disulfide bridges, structural properties, and kringle similarities.</title>
        <authorList>
            <person name="Johansson J."/>
            <person name="Curstedt T."/>
            <person name="Joernvall H."/>
        </authorList>
    </citation>
    <scope>DISULFIDE BONDS</scope>
</reference>
<evidence type="ECO:0000255" key="1">
    <source>
        <dbReference type="PROSITE-ProRule" id="PRU00415"/>
    </source>
</evidence>
<evidence type="ECO:0000269" key="2">
    <source>
    </source>
</evidence>